<protein>
    <recommendedName>
        <fullName>MyoD family inhibitor domain-containing protein</fullName>
    </recommendedName>
    <alternativeName>
        <fullName>I-mfa domain-containing protein</fullName>
    </alternativeName>
    <alternativeName>
        <fullName>XIC</fullName>
    </alternativeName>
</protein>
<dbReference type="EMBL" id="AY017419">
    <property type="protein sequence ID" value="AAG54082.1"/>
    <property type="molecule type" value="mRNA"/>
</dbReference>
<dbReference type="SMR" id="Q98SK0"/>
<dbReference type="BioGRID" id="99548">
    <property type="interactions" value="1"/>
</dbReference>
<dbReference type="KEGG" id="xla:398213"/>
<dbReference type="AGR" id="Xenbase:XB-GENE-866365"/>
<dbReference type="CTD" id="398213"/>
<dbReference type="Xenbase" id="XB-GENE-866365">
    <property type="gene designation" value="mdfic.S"/>
</dbReference>
<dbReference type="OrthoDB" id="8958154at2759"/>
<dbReference type="Proteomes" id="UP000186698">
    <property type="component" value="Chromosome 3S"/>
</dbReference>
<dbReference type="Bgee" id="398213">
    <property type="expression patterns" value="Expressed in egg cell and 19 other cell types or tissues"/>
</dbReference>
<dbReference type="GO" id="GO:0005737">
    <property type="term" value="C:cytoplasm"/>
    <property type="evidence" value="ECO:0000250"/>
    <property type="project" value="UniProtKB"/>
</dbReference>
<dbReference type="GO" id="GO:0005576">
    <property type="term" value="C:extracellular region"/>
    <property type="evidence" value="ECO:0007669"/>
    <property type="project" value="UniProtKB-SubCell"/>
</dbReference>
<dbReference type="GO" id="GO:0005730">
    <property type="term" value="C:nucleolus"/>
    <property type="evidence" value="ECO:0000318"/>
    <property type="project" value="GO_Central"/>
</dbReference>
<dbReference type="GO" id="GO:0005634">
    <property type="term" value="C:nucleus"/>
    <property type="evidence" value="ECO:0000250"/>
    <property type="project" value="UniProtKB"/>
</dbReference>
<dbReference type="GO" id="GO:0005886">
    <property type="term" value="C:plasma membrane"/>
    <property type="evidence" value="ECO:0007669"/>
    <property type="project" value="UniProtKB-SubCell"/>
</dbReference>
<dbReference type="GO" id="GO:0140297">
    <property type="term" value="F:DNA-binding transcription factor binding"/>
    <property type="evidence" value="ECO:0000353"/>
    <property type="project" value="UniProtKB"/>
</dbReference>
<dbReference type="GO" id="GO:0009950">
    <property type="term" value="P:dorsal/ventral axis specification"/>
    <property type="evidence" value="ECO:0000315"/>
    <property type="project" value="UniProtKB"/>
</dbReference>
<dbReference type="GO" id="GO:0043392">
    <property type="term" value="P:negative regulation of DNA binding"/>
    <property type="evidence" value="ECO:0000314"/>
    <property type="project" value="UniProtKB"/>
</dbReference>
<dbReference type="GO" id="GO:0045892">
    <property type="term" value="P:negative regulation of DNA-templated transcription"/>
    <property type="evidence" value="ECO:0000250"/>
    <property type="project" value="UniProtKB"/>
</dbReference>
<dbReference type="GO" id="GO:0042308">
    <property type="term" value="P:negative regulation of protein import into nucleus"/>
    <property type="evidence" value="ECO:0000250"/>
    <property type="project" value="UniProtKB"/>
</dbReference>
<dbReference type="GO" id="GO:0000122">
    <property type="term" value="P:negative regulation of transcription by RNA polymerase II"/>
    <property type="evidence" value="ECO:0000315"/>
    <property type="project" value="UniProtKB"/>
</dbReference>
<dbReference type="GO" id="GO:0030178">
    <property type="term" value="P:negative regulation of Wnt signaling pathway"/>
    <property type="evidence" value="ECO:0000315"/>
    <property type="project" value="UniProtKB"/>
</dbReference>
<dbReference type="GO" id="GO:0050434">
    <property type="term" value="P:positive regulation of viral transcription"/>
    <property type="evidence" value="ECO:0007669"/>
    <property type="project" value="TreeGrafter"/>
</dbReference>
<dbReference type="GO" id="GO:0046328">
    <property type="term" value="P:regulation of JNK cascade"/>
    <property type="evidence" value="ECO:0000318"/>
    <property type="project" value="GO_Central"/>
</dbReference>
<dbReference type="GO" id="GO:0030111">
    <property type="term" value="P:regulation of Wnt signaling pathway"/>
    <property type="evidence" value="ECO:0000318"/>
    <property type="project" value="GO_Central"/>
</dbReference>
<dbReference type="InterPro" id="IPR026134">
    <property type="entry name" value="MDFI/MDFIC"/>
</dbReference>
<dbReference type="PANTHER" id="PTHR15304">
    <property type="entry name" value="MYOD FAMILY INHIBITOR"/>
    <property type="match status" value="1"/>
</dbReference>
<dbReference type="PANTHER" id="PTHR15304:SF0">
    <property type="entry name" value="MYOD FAMILY INHIBITOR DOMAIN-CONTAINING PROTEIN"/>
    <property type="match status" value="1"/>
</dbReference>
<dbReference type="Pfam" id="PF15316">
    <property type="entry name" value="MDFI"/>
    <property type="match status" value="1"/>
</dbReference>
<organism>
    <name type="scientific">Xenopus laevis</name>
    <name type="common">African clawed frog</name>
    <dbReference type="NCBI Taxonomy" id="8355"/>
    <lineage>
        <taxon>Eukaryota</taxon>
        <taxon>Metazoa</taxon>
        <taxon>Chordata</taxon>
        <taxon>Craniata</taxon>
        <taxon>Vertebrata</taxon>
        <taxon>Euteleostomi</taxon>
        <taxon>Amphibia</taxon>
        <taxon>Batrachia</taxon>
        <taxon>Anura</taxon>
        <taxon>Pipoidea</taxon>
        <taxon>Pipidae</taxon>
        <taxon>Xenopodinae</taxon>
        <taxon>Xenopus</taxon>
        <taxon>Xenopus</taxon>
    </lineage>
</organism>
<reference evidence="8 9" key="1">
    <citation type="journal article" date="2001" name="Mol. Cell. Biol.">
        <title>Inhibition of Tcf3 binding by I-mfa domain proteins.</title>
        <authorList>
            <person name="Snider L."/>
            <person name="Thirlwell H."/>
            <person name="Miller J.R."/>
            <person name="Moon R.T."/>
            <person name="Groudine M."/>
            <person name="Tapscott S.J."/>
        </authorList>
    </citation>
    <scope>NUCLEOTIDE SEQUENCE [MRNA]</scope>
    <scope>FUNCTION</scope>
    <scope>TISSUE SPECIFICITY</scope>
    <scope>DEVELOPMENTAL STAGE</scope>
    <source>
        <tissue evidence="6">Oocyte</tissue>
    </source>
</reference>
<reference evidence="8" key="2">
    <citation type="journal article" date="2005" name="Mol. Cell. Biol.">
        <title>XIC is required for Siamois activity and dorsoanterior development.</title>
        <authorList>
            <person name="Snider L."/>
            <person name="Tapscott S.J."/>
        </authorList>
    </citation>
    <scope>FUNCTION</scope>
    <scope>TISSUE SPECIFICITY</scope>
</reference>
<gene>
    <name evidence="3" type="primary">mdfic</name>
</gene>
<name>MDFIC_XENLA</name>
<comment type="function">
    <text evidence="1 3 6 7">Required to control the activity of various transcription factors through their sequestration in the cytoplasm. Retains nuclear Zic proteins in the cytoplasm and inhibits their transcriptional activation (By similarity). Required for dorsoanterior development. Necessary for siamois to activate downstream target genes, including gsc, during execution of the dorsal organizer program. Also regulates the transcriptional activity of TCF7L1/TCF3 by interacting directly with TCF7L1/TCF3 and preventing it from binding DNA. Involved in the development of lymphatic vessel valves. It is required to promote lymphatic endothelial cell migration, in a process that involves down-regulation of integrin beta 1 activation and control of cell adhesion to the extracellular matrix (By similarity).</text>
</comment>
<comment type="subcellular location">
    <subcellularLocation>
        <location evidence="3">Cytoplasm</location>
    </subcellularLocation>
    <subcellularLocation>
        <location evidence="2">Cell membrane</location>
        <topology evidence="2">Single-pass membrane protein</topology>
    </subcellularLocation>
    <subcellularLocation>
        <location evidence="2">Secreted</location>
    </subcellularLocation>
</comment>
<comment type="tissue specificity">
    <text evidence="6 7">Expressed broadly at a low level in the early embryo.</text>
</comment>
<comment type="developmental stage">
    <text evidence="6">Expressed both maternally and zygotically, with expression persisting to at least tadpole stages.</text>
</comment>
<comment type="domain">
    <text evidence="3">The cysteine-rich C-terminus is involved in its granular distribution in the cytoplasm (By similarity).</text>
</comment>
<comment type="similarity">
    <text evidence="4">Belongs to the MDFI family.</text>
</comment>
<sequence length="246" mass="26766">MSQEREPFSPRPEGPEQVTSTEESLLVPLPHGKCEKENMDLEDTTLYRNKSIQTDIEDRSILEDNSNSQPIKAQPQRLPQPNTSALEQSEEETGKIQNGHVGLSNINGIHNGVKHVPADHRNISAPVSQKMHRKIQSSLSVSSDGSKKSKESSAYSQKPSASPEDGCVHCILTCLFCEFLTLCNIVVGQASCGICTSEACCCCCTEEMGDDCNCPCDMDCGIMDACCESSDCLEICMECCGICFPS</sequence>
<evidence type="ECO:0000250" key="1"/>
<evidence type="ECO:0000250" key="2">
    <source>
        <dbReference type="UniProtKB" id="Q8BX65"/>
    </source>
</evidence>
<evidence type="ECO:0000250" key="3">
    <source>
        <dbReference type="UniProtKB" id="Q9P1T7"/>
    </source>
</evidence>
<evidence type="ECO:0000255" key="4"/>
<evidence type="ECO:0000256" key="5">
    <source>
        <dbReference type="SAM" id="MobiDB-lite"/>
    </source>
</evidence>
<evidence type="ECO:0000269" key="6">
    <source>
    </source>
</evidence>
<evidence type="ECO:0000269" key="7">
    <source>
    </source>
</evidence>
<evidence type="ECO:0000305" key="8"/>
<evidence type="ECO:0000312" key="9">
    <source>
        <dbReference type="EMBL" id="AAG54082.1"/>
    </source>
</evidence>
<accession>Q98SK0</accession>
<keyword id="KW-1003">Cell membrane</keyword>
<keyword id="KW-0963">Cytoplasm</keyword>
<keyword id="KW-0217">Developmental protein</keyword>
<keyword id="KW-0472">Membrane</keyword>
<keyword id="KW-1185">Reference proteome</keyword>
<keyword id="KW-0964">Secreted</keyword>
<keyword id="KW-0804">Transcription</keyword>
<keyword id="KW-0805">Transcription regulation</keyword>
<keyword id="KW-0812">Transmembrane</keyword>
<keyword id="KW-1133">Transmembrane helix</keyword>
<feature type="chain" id="PRO_0000280224" description="MyoD family inhibitor domain-containing protein">
    <location>
        <begin position="1"/>
        <end position="246"/>
    </location>
</feature>
<feature type="topological domain" description="Extracellular" evidence="2">
    <location>
        <begin position="1"/>
        <end position="170"/>
    </location>
</feature>
<feature type="transmembrane region" description="Helical" evidence="2">
    <location>
        <begin position="171"/>
        <end position="188"/>
    </location>
</feature>
<feature type="topological domain" description="Cytoplasmic" evidence="2">
    <location>
        <begin position="189"/>
        <end position="246"/>
    </location>
</feature>
<feature type="domain" description="MDFI">
    <location>
        <begin position="74"/>
        <end position="246"/>
    </location>
</feature>
<feature type="region of interest" description="Disordered" evidence="5">
    <location>
        <begin position="1"/>
        <end position="93"/>
    </location>
</feature>
<feature type="region of interest" description="Disordered" evidence="5">
    <location>
        <begin position="134"/>
        <end position="164"/>
    </location>
</feature>
<feature type="compositionally biased region" description="Polar residues" evidence="5">
    <location>
        <begin position="63"/>
        <end position="87"/>
    </location>
</feature>
<proteinExistence type="evidence at transcript level"/>